<organism>
    <name type="scientific">Conus radiatus</name>
    <name type="common">Rayed cone</name>
    <dbReference type="NCBI Taxonomy" id="61198"/>
    <lineage>
        <taxon>Eukaryota</taxon>
        <taxon>Metazoa</taxon>
        <taxon>Spiralia</taxon>
        <taxon>Lophotrochozoa</taxon>
        <taxon>Mollusca</taxon>
        <taxon>Gastropoda</taxon>
        <taxon>Caenogastropoda</taxon>
        <taxon>Neogastropoda</taxon>
        <taxon>Conoidea</taxon>
        <taxon>Conidae</taxon>
        <taxon>Conus</taxon>
        <taxon>Phasmoconus</taxon>
    </lineage>
</organism>
<protein>
    <recommendedName>
        <fullName evidence="11">Contryphan-R</fullName>
    </recommendedName>
    <alternativeName>
        <fullName evidence="12">Bromocontryphan</fullName>
    </alternativeName>
    <component>
        <recommendedName>
            <fullName evidence="11">[Des-Gly1]-contryphan-R</fullName>
        </recommendedName>
    </component>
</protein>
<sequence>MGKLTILVLVAAVLLSAQVMVQGDGDQPADRNAVPRDDNPGGASGKFMNVLRRSGCPWEPWCG</sequence>
<evidence type="ECO:0000250" key="1">
    <source>
        <dbReference type="UniProtKB" id="P0C248"/>
    </source>
</evidence>
<evidence type="ECO:0000250" key="2">
    <source>
        <dbReference type="UniProtKB" id="P0C250"/>
    </source>
</evidence>
<evidence type="ECO:0000250" key="3">
    <source>
        <dbReference type="UniProtKB" id="P62903"/>
    </source>
</evidence>
<evidence type="ECO:0000250" key="4">
    <source>
        <dbReference type="UniProtKB" id="P83047"/>
    </source>
</evidence>
<evidence type="ECO:0000255" key="5"/>
<evidence type="ECO:0000256" key="6">
    <source>
        <dbReference type="SAM" id="MobiDB-lite"/>
    </source>
</evidence>
<evidence type="ECO:0000269" key="7">
    <source>
    </source>
</evidence>
<evidence type="ECO:0000269" key="8">
    <source>
    </source>
</evidence>
<evidence type="ECO:0000269" key="9">
    <source>
    </source>
</evidence>
<evidence type="ECO:0000269" key="10">
    <source>
    </source>
</evidence>
<evidence type="ECO:0000303" key="11">
    <source>
    </source>
</evidence>
<evidence type="ECO:0000303" key="12">
    <source>
    </source>
</evidence>
<evidence type="ECO:0000305" key="13"/>
<evidence type="ECO:0000305" key="14">
    <source>
    </source>
</evidence>
<evidence type="ECO:0000305" key="15">
    <source>
    </source>
</evidence>
<evidence type="ECO:0007829" key="16">
    <source>
        <dbReference type="PDB" id="1QFB"/>
    </source>
</evidence>
<dbReference type="PIR" id="A58511">
    <property type="entry name" value="A58511"/>
</dbReference>
<dbReference type="PDB" id="1DG0">
    <property type="method" value="NMR"/>
    <property type="chains" value="A=56-62"/>
</dbReference>
<dbReference type="PDB" id="1QFB">
    <property type="method" value="NMR"/>
    <property type="chains" value="A=55-62"/>
</dbReference>
<dbReference type="PDBsum" id="1DG0"/>
<dbReference type="PDBsum" id="1QFB"/>
<dbReference type="BMRB" id="P58786"/>
<dbReference type="SMR" id="P58786"/>
<dbReference type="ConoServer" id="1310">
    <property type="toxin name" value="Contryphan-R precursor"/>
</dbReference>
<dbReference type="EvolutionaryTrace" id="P58786"/>
<dbReference type="GO" id="GO:0005576">
    <property type="term" value="C:extracellular region"/>
    <property type="evidence" value="ECO:0007669"/>
    <property type="project" value="UniProtKB-SubCell"/>
</dbReference>
<dbReference type="GO" id="GO:0008200">
    <property type="term" value="F:ion channel inhibitor activity"/>
    <property type="evidence" value="ECO:0007669"/>
    <property type="project" value="InterPro"/>
</dbReference>
<dbReference type="GO" id="GO:0090729">
    <property type="term" value="F:toxin activity"/>
    <property type="evidence" value="ECO:0007669"/>
    <property type="project" value="UniProtKB-KW"/>
</dbReference>
<dbReference type="InterPro" id="IPR004214">
    <property type="entry name" value="Conotoxin"/>
</dbReference>
<dbReference type="InterPro" id="IPR011062">
    <property type="entry name" value="Contryphan_CS"/>
</dbReference>
<dbReference type="Pfam" id="PF02950">
    <property type="entry name" value="Conotoxin"/>
    <property type="match status" value="1"/>
</dbReference>
<dbReference type="PROSITE" id="PS60027">
    <property type="entry name" value="CONTRYPHAN"/>
    <property type="match status" value="1"/>
</dbReference>
<accession>P58786</accession>
<feature type="signal peptide" evidence="5">
    <location>
        <begin position="1"/>
        <end position="23"/>
    </location>
</feature>
<feature type="propeptide" id="PRO_0000035070" evidence="9 10">
    <location>
        <begin position="24"/>
        <end position="54"/>
    </location>
</feature>
<feature type="peptide" id="PRO_0000035071" description="Contryphan-R" evidence="7 9 10">
    <location>
        <begin position="55"/>
        <end position="62"/>
    </location>
</feature>
<feature type="peptide" id="PRO_0000035072" description="[Des-Gly1]-contryphan-R" evidence="9">
    <location>
        <begin position="56"/>
        <end position="62"/>
    </location>
</feature>
<feature type="region of interest" description="Disordered" evidence="6">
    <location>
        <begin position="24"/>
        <end position="48"/>
    </location>
</feature>
<feature type="modified residue" description="4-hydroxyproline" evidence="9 10">
    <location>
        <position position="57"/>
    </location>
</feature>
<feature type="modified residue" description="D-tryptophan" evidence="9 10">
    <location>
        <position position="58"/>
    </location>
</feature>
<feature type="modified residue" description="6'-bromotryptophan; in form bromocontryphan" evidence="10">
    <location>
        <position position="61"/>
    </location>
</feature>
<feature type="modified residue" description="Cysteine amide" evidence="9 10">
    <location>
        <position position="62"/>
    </location>
</feature>
<feature type="disulfide bond" evidence="7 8 10">
    <location>
        <begin position="56"/>
        <end position="62"/>
    </location>
</feature>
<feature type="strand" evidence="16">
    <location>
        <begin position="57"/>
        <end position="59"/>
    </location>
</feature>
<keyword id="KW-0002">3D-structure</keyword>
<keyword id="KW-0027">Amidation</keyword>
<keyword id="KW-0102">Bromination</keyword>
<keyword id="KW-0208">D-amino acid</keyword>
<keyword id="KW-0903">Direct protein sequencing</keyword>
<keyword id="KW-1015">Disulfide bond</keyword>
<keyword id="KW-0379">Hydroxylation</keyword>
<keyword id="KW-0872">Ion channel impairing toxin</keyword>
<keyword id="KW-0528">Neurotoxin</keyword>
<keyword id="KW-0964">Secreted</keyword>
<keyword id="KW-0732">Signal</keyword>
<keyword id="KW-0800">Toxin</keyword>
<reference key="1">
    <citation type="journal article" date="1997" name="Biochemistry">
        <title>Bromocontryphan: post-translational bromination of tryptophan.</title>
        <authorList>
            <person name="Jimenez E.C."/>
            <person name="Craig A.G."/>
            <person name="Watkins M."/>
            <person name="Hillyard D.R."/>
            <person name="Gray W.R."/>
            <person name="Gulyas J."/>
            <person name="Rivier J.E."/>
            <person name="Cruz L.J."/>
            <person name="Olivera B.M."/>
        </authorList>
    </citation>
    <scope>NUCLEOTIDE SEQUENCE [MRNA]</scope>
    <scope>PROTEIN SEQUENCE OF 55-62</scope>
    <scope>HYDROXYLATION AT PRO-57</scope>
    <scope>D-AMINO ACID AT TRP-58</scope>
    <scope>BROMINATION AT TRP-61</scope>
    <scope>AMIDATION AT CYS-62</scope>
    <scope>SYNTHESIS OF 55-62 (BROMOCONTRYPHAN)</scope>
    <scope>MASS SPECTROMETRY</scope>
    <scope>SUBCELLULAR LOCATION</scope>
    <source>
        <tissue>Venom</tissue>
        <tissue>Venom duct</tissue>
    </source>
</reference>
<reference key="2">
    <citation type="journal article" date="1996" name="J. Biol. Chem.">
        <title>Contryphan is a D-tryptophan-containing Conus peptide.</title>
        <authorList>
            <person name="Jimenez E.C."/>
            <person name="Olivera B.M."/>
            <person name="Gray W.R."/>
            <person name="Cruz L.J."/>
        </authorList>
    </citation>
    <scope>PROTEIN SEQUENCE OF 55-62</scope>
    <scope>HYDROXYLATION AT PRO-57</scope>
    <scope>D-AMINO ACID AT TRP-58</scope>
    <scope>AMIDATION AT CYS-62</scope>
    <scope>SYNTHESIS OF 55-62 (CONTRYPHAN)</scope>
    <scope>MASS SPECTROMETRY</scope>
    <scope>SUBCELLULAR LOCATION</scope>
    <source>
        <tissue>Venom</tissue>
    </source>
</reference>
<reference key="3">
    <citation type="journal article" date="1999" name="Biochemistry">
        <title>Solution structure of contryphan-R, a naturally occurring disulfide-bridged octapeptide containing D-tryptophan: comparison with protein loops.</title>
        <authorList>
            <person name="Pallaghy P.K."/>
            <person name="Melnikova A.P."/>
            <person name="Jimenez E.C."/>
            <person name="Olivera B.M."/>
            <person name="Norton R.S."/>
        </authorList>
    </citation>
    <scope>STRUCTURE BY NMR OF 55-62</scope>
    <scope>DISULFIDE BONDS</scope>
    <scope>CIS-TRANS ISOMERIZATION</scope>
</reference>
<reference key="4">
    <citation type="journal article" date="2000" name="Biochemistry">
        <title>Structures of the contryphan family of cyclic peptides. Role of electrostatic interactions in cis-trans isomerism.</title>
        <authorList>
            <person name="Pallaghy P.K."/>
            <person name="He W."/>
            <person name="Jimenez E.C."/>
            <person name="Olivera B.M."/>
            <person name="Norton R.S."/>
        </authorList>
    </citation>
    <scope>STRUCTURE BY NMR OF 56-62 (MAJOR (CIS) CONFORMER)</scope>
    <scope>DISULFIDE BONDS</scope>
    <scope>CIS-TRANS ISOMERIZATION</scope>
</reference>
<name>COW_CONRA</name>
<comment type="function">
    <text evidence="1 2 3 4">Its target is unknown, but this toxin may modulate voltage-activated calcium channels (Cav) or calcium-dependent potassium channels (KCa).</text>
</comment>
<comment type="subcellular location">
    <subcellularLocation>
        <location evidence="9 10">Secreted</location>
    </subcellularLocation>
</comment>
<comment type="tissue specificity">
    <text evidence="14 15">Expressed by the venom duct.</text>
</comment>
<comment type="domain">
    <text evidence="13">The cysteine framework is C-C.</text>
</comment>
<comment type="PTM">
    <text evidence="10">The differences between contryphan-R and bromocontryphan lies in the state of bromination of Trp-61.</text>
</comment>
<comment type="mass spectrometry">
    <molecule>Contryphan-R</molecule>
    <text>Contryphan-R.</text>
</comment>
<comment type="mass spectrometry">
    <molecule>[Des-Gly1]-contryphan-R</molecule>
    <text>[Des-Gly1]contryphan-R.</text>
</comment>
<comment type="mass spectrometry">
    <molecule>Contryphan-R</molecule>
    <text>Bromocontryphan.</text>
</comment>
<comment type="miscellaneous">
    <text evidence="7 8">Contryphan-R and [Des-Gly1]-contryphan-R exist in two forms, due to cis-trans isomerization at 56-Cys-hydroxyPro-57.</text>
</comment>
<comment type="similarity">
    <text evidence="13">Belongs to the O2 superfamily. Contryphan family.</text>
</comment>
<proteinExistence type="evidence at protein level"/>